<gene>
    <name evidence="1" type="primary">pdxH</name>
    <name type="ordered locus">Spea_2477</name>
</gene>
<dbReference type="EC" id="1.4.3.5" evidence="1"/>
<dbReference type="EMBL" id="CP000851">
    <property type="protein sequence ID" value="ABV87797.1"/>
    <property type="molecule type" value="Genomic_DNA"/>
</dbReference>
<dbReference type="RefSeq" id="WP_012155706.1">
    <property type="nucleotide sequence ID" value="NC_009901.1"/>
</dbReference>
<dbReference type="SMR" id="A8H5G0"/>
<dbReference type="STRING" id="398579.Spea_2477"/>
<dbReference type="KEGG" id="spl:Spea_2477"/>
<dbReference type="eggNOG" id="COG0259">
    <property type="taxonomic scope" value="Bacteria"/>
</dbReference>
<dbReference type="HOGENOM" id="CLU_032263_2_2_6"/>
<dbReference type="OrthoDB" id="9780392at2"/>
<dbReference type="UniPathway" id="UPA01068">
    <property type="reaction ID" value="UER00304"/>
</dbReference>
<dbReference type="UniPathway" id="UPA01068">
    <property type="reaction ID" value="UER00305"/>
</dbReference>
<dbReference type="Proteomes" id="UP000002608">
    <property type="component" value="Chromosome"/>
</dbReference>
<dbReference type="GO" id="GO:0010181">
    <property type="term" value="F:FMN binding"/>
    <property type="evidence" value="ECO:0007669"/>
    <property type="project" value="UniProtKB-UniRule"/>
</dbReference>
<dbReference type="GO" id="GO:0004733">
    <property type="term" value="F:pyridoxamine phosphate oxidase activity"/>
    <property type="evidence" value="ECO:0007669"/>
    <property type="project" value="UniProtKB-UniRule"/>
</dbReference>
<dbReference type="GO" id="GO:0008615">
    <property type="term" value="P:pyridoxine biosynthetic process"/>
    <property type="evidence" value="ECO:0007669"/>
    <property type="project" value="UniProtKB-KW"/>
</dbReference>
<dbReference type="Gene3D" id="2.30.110.10">
    <property type="entry name" value="Electron Transport, Fmn-binding Protein, Chain A"/>
    <property type="match status" value="1"/>
</dbReference>
<dbReference type="HAMAP" id="MF_01629">
    <property type="entry name" value="PdxH"/>
    <property type="match status" value="1"/>
</dbReference>
<dbReference type="InterPro" id="IPR000659">
    <property type="entry name" value="Pyridox_Oxase"/>
</dbReference>
<dbReference type="InterPro" id="IPR019740">
    <property type="entry name" value="Pyridox_Oxase_CS"/>
</dbReference>
<dbReference type="InterPro" id="IPR011576">
    <property type="entry name" value="Pyridox_Oxase_N"/>
</dbReference>
<dbReference type="InterPro" id="IPR019576">
    <property type="entry name" value="Pyridoxamine_oxidase_dimer_C"/>
</dbReference>
<dbReference type="InterPro" id="IPR012349">
    <property type="entry name" value="Split_barrel_FMN-bd"/>
</dbReference>
<dbReference type="NCBIfam" id="TIGR00558">
    <property type="entry name" value="pdxH"/>
    <property type="match status" value="1"/>
</dbReference>
<dbReference type="NCBIfam" id="NF004231">
    <property type="entry name" value="PRK05679.1"/>
    <property type="match status" value="1"/>
</dbReference>
<dbReference type="PANTHER" id="PTHR10851:SF0">
    <property type="entry name" value="PYRIDOXINE-5'-PHOSPHATE OXIDASE"/>
    <property type="match status" value="1"/>
</dbReference>
<dbReference type="PANTHER" id="PTHR10851">
    <property type="entry name" value="PYRIDOXINE-5-PHOSPHATE OXIDASE"/>
    <property type="match status" value="1"/>
</dbReference>
<dbReference type="Pfam" id="PF10590">
    <property type="entry name" value="PNP_phzG_C"/>
    <property type="match status" value="1"/>
</dbReference>
<dbReference type="Pfam" id="PF01243">
    <property type="entry name" value="PNPOx_N"/>
    <property type="match status" value="1"/>
</dbReference>
<dbReference type="PIRSF" id="PIRSF000190">
    <property type="entry name" value="Pyd_amn-ph_oxd"/>
    <property type="match status" value="1"/>
</dbReference>
<dbReference type="SUPFAM" id="SSF50475">
    <property type="entry name" value="FMN-binding split barrel"/>
    <property type="match status" value="1"/>
</dbReference>
<dbReference type="PROSITE" id="PS01064">
    <property type="entry name" value="PYRIDOX_OXIDASE"/>
    <property type="match status" value="1"/>
</dbReference>
<proteinExistence type="inferred from homology"/>
<keyword id="KW-0285">Flavoprotein</keyword>
<keyword id="KW-0288">FMN</keyword>
<keyword id="KW-0560">Oxidoreductase</keyword>
<keyword id="KW-0664">Pyridoxine biosynthesis</keyword>
<keyword id="KW-1185">Reference proteome</keyword>
<sequence>MSEISGIRREYTLGELHNEEVPSDPMDLFNAWLEVIRDSDIKDPTAMSVATVDENGQPFQRIVLLKRFDNHGFVFFTNLESRKAQHIANNAQVSILFPWHSLDKQVAVTGIAEPLSKTEVLKYFMSRPKESQIASWVSKQSSPISARKALESKFAEMKAKFSQGDVPLPKFWGGYLVRPKSIEFWQGGEHRLHDRFIYTKKEESWEHTRLAP</sequence>
<reference key="1">
    <citation type="submission" date="2007-10" db="EMBL/GenBank/DDBJ databases">
        <title>Complete sequence of Shewanella pealeana ATCC 700345.</title>
        <authorList>
            <consortium name="US DOE Joint Genome Institute"/>
            <person name="Copeland A."/>
            <person name="Lucas S."/>
            <person name="Lapidus A."/>
            <person name="Barry K."/>
            <person name="Glavina del Rio T."/>
            <person name="Dalin E."/>
            <person name="Tice H."/>
            <person name="Pitluck S."/>
            <person name="Chertkov O."/>
            <person name="Brettin T."/>
            <person name="Bruce D."/>
            <person name="Detter J.C."/>
            <person name="Han C."/>
            <person name="Schmutz J."/>
            <person name="Larimer F."/>
            <person name="Land M."/>
            <person name="Hauser L."/>
            <person name="Kyrpides N."/>
            <person name="Kim E."/>
            <person name="Zhao J.-S.Z."/>
            <person name="Manno D."/>
            <person name="Hawari J."/>
            <person name="Richardson P."/>
        </authorList>
    </citation>
    <scope>NUCLEOTIDE SEQUENCE [LARGE SCALE GENOMIC DNA]</scope>
    <source>
        <strain>ATCC 700345 / ANG-SQ1</strain>
    </source>
</reference>
<evidence type="ECO:0000255" key="1">
    <source>
        <dbReference type="HAMAP-Rule" id="MF_01629"/>
    </source>
</evidence>
<feature type="chain" id="PRO_0000335801" description="Pyridoxine/pyridoxamine 5'-phosphate oxidase">
    <location>
        <begin position="1"/>
        <end position="212"/>
    </location>
</feature>
<feature type="binding site" evidence="1">
    <location>
        <begin position="8"/>
        <end position="11"/>
    </location>
    <ligand>
        <name>substrate</name>
    </ligand>
</feature>
<feature type="binding site" evidence="1">
    <location>
        <begin position="61"/>
        <end position="66"/>
    </location>
    <ligand>
        <name>FMN</name>
        <dbReference type="ChEBI" id="CHEBI:58210"/>
    </ligand>
</feature>
<feature type="binding site" evidence="1">
    <location>
        <position position="66"/>
    </location>
    <ligand>
        <name>substrate</name>
    </ligand>
</feature>
<feature type="binding site" evidence="1">
    <location>
        <begin position="76"/>
        <end position="77"/>
    </location>
    <ligand>
        <name>FMN</name>
        <dbReference type="ChEBI" id="CHEBI:58210"/>
    </ligand>
</feature>
<feature type="binding site" evidence="1">
    <location>
        <position position="82"/>
    </location>
    <ligand>
        <name>FMN</name>
        <dbReference type="ChEBI" id="CHEBI:58210"/>
    </ligand>
</feature>
<feature type="binding site" evidence="1">
    <location>
        <position position="83"/>
    </location>
    <ligand>
        <name>FMN</name>
        <dbReference type="ChEBI" id="CHEBI:58210"/>
    </ligand>
</feature>
<feature type="binding site" evidence="1">
    <location>
        <position position="105"/>
    </location>
    <ligand>
        <name>FMN</name>
        <dbReference type="ChEBI" id="CHEBI:58210"/>
    </ligand>
</feature>
<feature type="binding site" evidence="1">
    <location>
        <position position="123"/>
    </location>
    <ligand>
        <name>substrate</name>
    </ligand>
</feature>
<feature type="binding site" evidence="1">
    <location>
        <position position="127"/>
    </location>
    <ligand>
        <name>substrate</name>
    </ligand>
</feature>
<feature type="binding site" evidence="1">
    <location>
        <position position="131"/>
    </location>
    <ligand>
        <name>substrate</name>
    </ligand>
</feature>
<feature type="binding site" evidence="1">
    <location>
        <begin position="140"/>
        <end position="141"/>
    </location>
    <ligand>
        <name>FMN</name>
        <dbReference type="ChEBI" id="CHEBI:58210"/>
    </ligand>
</feature>
<feature type="binding site" evidence="1">
    <location>
        <position position="185"/>
    </location>
    <ligand>
        <name>FMN</name>
        <dbReference type="ChEBI" id="CHEBI:58210"/>
    </ligand>
</feature>
<feature type="binding site" evidence="1">
    <location>
        <begin position="191"/>
        <end position="193"/>
    </location>
    <ligand>
        <name>substrate</name>
    </ligand>
</feature>
<feature type="binding site" evidence="1">
    <location>
        <position position="195"/>
    </location>
    <ligand>
        <name>FMN</name>
        <dbReference type="ChEBI" id="CHEBI:58210"/>
    </ligand>
</feature>
<protein>
    <recommendedName>
        <fullName evidence="1">Pyridoxine/pyridoxamine 5'-phosphate oxidase</fullName>
        <ecNumber evidence="1">1.4.3.5</ecNumber>
    </recommendedName>
    <alternativeName>
        <fullName evidence="1">PNP/PMP oxidase</fullName>
        <shortName evidence="1">PNPOx</shortName>
    </alternativeName>
    <alternativeName>
        <fullName evidence="1">Pyridoxal 5'-phosphate synthase</fullName>
    </alternativeName>
</protein>
<comment type="function">
    <text evidence="1">Catalyzes the oxidation of either pyridoxine 5'-phosphate (PNP) or pyridoxamine 5'-phosphate (PMP) into pyridoxal 5'-phosphate (PLP).</text>
</comment>
<comment type="catalytic activity">
    <reaction evidence="1">
        <text>pyridoxamine 5'-phosphate + O2 + H2O = pyridoxal 5'-phosphate + H2O2 + NH4(+)</text>
        <dbReference type="Rhea" id="RHEA:15817"/>
        <dbReference type="ChEBI" id="CHEBI:15377"/>
        <dbReference type="ChEBI" id="CHEBI:15379"/>
        <dbReference type="ChEBI" id="CHEBI:16240"/>
        <dbReference type="ChEBI" id="CHEBI:28938"/>
        <dbReference type="ChEBI" id="CHEBI:58451"/>
        <dbReference type="ChEBI" id="CHEBI:597326"/>
        <dbReference type="EC" id="1.4.3.5"/>
    </reaction>
</comment>
<comment type="catalytic activity">
    <reaction evidence="1">
        <text>pyridoxine 5'-phosphate + O2 = pyridoxal 5'-phosphate + H2O2</text>
        <dbReference type="Rhea" id="RHEA:15149"/>
        <dbReference type="ChEBI" id="CHEBI:15379"/>
        <dbReference type="ChEBI" id="CHEBI:16240"/>
        <dbReference type="ChEBI" id="CHEBI:58589"/>
        <dbReference type="ChEBI" id="CHEBI:597326"/>
        <dbReference type="EC" id="1.4.3.5"/>
    </reaction>
</comment>
<comment type="cofactor">
    <cofactor evidence="1">
        <name>FMN</name>
        <dbReference type="ChEBI" id="CHEBI:58210"/>
    </cofactor>
    <text evidence="1">Binds 1 FMN per subunit.</text>
</comment>
<comment type="pathway">
    <text evidence="1">Cofactor metabolism; pyridoxal 5'-phosphate salvage; pyridoxal 5'-phosphate from pyridoxamine 5'-phosphate: step 1/1.</text>
</comment>
<comment type="pathway">
    <text evidence="1">Cofactor metabolism; pyridoxal 5'-phosphate salvage; pyridoxal 5'-phosphate from pyridoxine 5'-phosphate: step 1/1.</text>
</comment>
<comment type="subunit">
    <text evidence="1">Homodimer.</text>
</comment>
<comment type="similarity">
    <text evidence="1">Belongs to the pyridoxamine 5'-phosphate oxidase family.</text>
</comment>
<name>PDXH_SHEPA</name>
<organism>
    <name type="scientific">Shewanella pealeana (strain ATCC 700345 / ANG-SQ1)</name>
    <dbReference type="NCBI Taxonomy" id="398579"/>
    <lineage>
        <taxon>Bacteria</taxon>
        <taxon>Pseudomonadati</taxon>
        <taxon>Pseudomonadota</taxon>
        <taxon>Gammaproteobacteria</taxon>
        <taxon>Alteromonadales</taxon>
        <taxon>Shewanellaceae</taxon>
        <taxon>Shewanella</taxon>
    </lineage>
</organism>
<accession>A8H5G0</accession>